<accession>B1LJ43</accession>
<feature type="chain" id="PRO_1000136669" description="Macrodomain Ter protein">
    <location>
        <begin position="1"/>
        <end position="150"/>
    </location>
</feature>
<gene>
    <name evidence="1" type="primary">matP</name>
    <name type="ordered locus">EcSMS35_2164</name>
</gene>
<keyword id="KW-0131">Cell cycle</keyword>
<keyword id="KW-0132">Cell division</keyword>
<keyword id="KW-0963">Cytoplasm</keyword>
<keyword id="KW-0238">DNA-binding</keyword>
<comment type="function">
    <text evidence="1">Required for spatial organization of the terminus region of the chromosome (Ter macrodomain) during the cell cycle. Prevents early segregation of duplicated Ter macrodomains during cell division. Binds specifically to matS, which is a 13 bp signature motif repeated within the Ter macrodomain.</text>
</comment>
<comment type="subunit">
    <text evidence="1">Homodimer.</text>
</comment>
<comment type="subcellular location">
    <subcellularLocation>
        <location evidence="1">Cytoplasm</location>
    </subcellularLocation>
</comment>
<comment type="similarity">
    <text evidence="1">Belongs to the MatP family.</text>
</comment>
<organism>
    <name type="scientific">Escherichia coli (strain SMS-3-5 / SECEC)</name>
    <dbReference type="NCBI Taxonomy" id="439855"/>
    <lineage>
        <taxon>Bacteria</taxon>
        <taxon>Pseudomonadati</taxon>
        <taxon>Pseudomonadota</taxon>
        <taxon>Gammaproteobacteria</taxon>
        <taxon>Enterobacterales</taxon>
        <taxon>Enterobacteriaceae</taxon>
        <taxon>Escherichia</taxon>
    </lineage>
</organism>
<evidence type="ECO:0000255" key="1">
    <source>
        <dbReference type="HAMAP-Rule" id="MF_01073"/>
    </source>
</evidence>
<reference key="1">
    <citation type="journal article" date="2008" name="J. Bacteriol.">
        <title>Insights into the environmental resistance gene pool from the genome sequence of the multidrug-resistant environmental isolate Escherichia coli SMS-3-5.</title>
        <authorList>
            <person name="Fricke W.F."/>
            <person name="Wright M.S."/>
            <person name="Lindell A.H."/>
            <person name="Harkins D.M."/>
            <person name="Baker-Austin C."/>
            <person name="Ravel J."/>
            <person name="Stepanauskas R."/>
        </authorList>
    </citation>
    <scope>NUCLEOTIDE SEQUENCE [LARGE SCALE GENOMIC DNA]</scope>
    <source>
        <strain>SMS-3-5 / SECEC</strain>
    </source>
</reference>
<protein>
    <recommendedName>
        <fullName evidence="1">Macrodomain Ter protein</fullName>
    </recommendedName>
</protein>
<dbReference type="EMBL" id="CP000970">
    <property type="protein sequence ID" value="ACB17109.1"/>
    <property type="molecule type" value="Genomic_DNA"/>
</dbReference>
<dbReference type="RefSeq" id="WP_000877166.1">
    <property type="nucleotide sequence ID" value="NC_010498.1"/>
</dbReference>
<dbReference type="SMR" id="B1LJ43"/>
<dbReference type="KEGG" id="ecm:EcSMS35_2164"/>
<dbReference type="HOGENOM" id="CLU_142157_0_0_6"/>
<dbReference type="Proteomes" id="UP000007011">
    <property type="component" value="Chromosome"/>
</dbReference>
<dbReference type="GO" id="GO:0005737">
    <property type="term" value="C:cytoplasm"/>
    <property type="evidence" value="ECO:0007669"/>
    <property type="project" value="UniProtKB-SubCell"/>
</dbReference>
<dbReference type="GO" id="GO:0043565">
    <property type="term" value="F:sequence-specific DNA binding"/>
    <property type="evidence" value="ECO:0007669"/>
    <property type="project" value="UniProtKB-UniRule"/>
</dbReference>
<dbReference type="GO" id="GO:0051301">
    <property type="term" value="P:cell division"/>
    <property type="evidence" value="ECO:0007669"/>
    <property type="project" value="UniProtKB-UniRule"/>
</dbReference>
<dbReference type="GO" id="GO:0006355">
    <property type="term" value="P:regulation of DNA-templated transcription"/>
    <property type="evidence" value="ECO:0007669"/>
    <property type="project" value="InterPro"/>
</dbReference>
<dbReference type="FunFam" id="1.10.1220.10:FF:000004">
    <property type="entry name" value="Macrodomain Ter protein"/>
    <property type="match status" value="1"/>
</dbReference>
<dbReference type="FunFam" id="1.20.1270.380:FF:000001">
    <property type="entry name" value="Macrodomain Ter protein"/>
    <property type="match status" value="1"/>
</dbReference>
<dbReference type="Gene3D" id="1.20.1270.380">
    <property type="entry name" value="MatP, N-terminal domain"/>
    <property type="match status" value="1"/>
</dbReference>
<dbReference type="Gene3D" id="1.10.1220.10">
    <property type="entry name" value="Met repressor-like"/>
    <property type="match status" value="1"/>
</dbReference>
<dbReference type="HAMAP" id="MF_01073">
    <property type="entry name" value="MatP"/>
    <property type="match status" value="1"/>
</dbReference>
<dbReference type="InterPro" id="IPR013321">
    <property type="entry name" value="Arc_rbn_hlx_hlx"/>
</dbReference>
<dbReference type="InterPro" id="IPR009390">
    <property type="entry name" value="MatP"/>
</dbReference>
<dbReference type="InterPro" id="IPR035375">
    <property type="entry name" value="MatP_C"/>
</dbReference>
<dbReference type="InterPro" id="IPR035087">
    <property type="entry name" value="MatP_N"/>
</dbReference>
<dbReference type="InterPro" id="IPR038339">
    <property type="entry name" value="MatP_N_sf"/>
</dbReference>
<dbReference type="NCBIfam" id="NF003471">
    <property type="entry name" value="PRK05097.1"/>
    <property type="match status" value="1"/>
</dbReference>
<dbReference type="Pfam" id="PF06303">
    <property type="entry name" value="MatP"/>
    <property type="match status" value="1"/>
</dbReference>
<dbReference type="Pfam" id="PF17414">
    <property type="entry name" value="MatP_C"/>
    <property type="match status" value="1"/>
</dbReference>
<proteinExistence type="inferred from homology"/>
<sequence>MKYQQLENLESGWKWKYLVKKHREGELITRYIEASAAQEAVDVLLSLENEPVLVNNWIDKHMNPELVNRMKQTIRARRKRHFNAEHQHTRKKSIDLEFIVWQRLAGLAQRRGKTLSETIVQLIEDAENKEKYANKMSSLKQDLQALLGKE</sequence>
<name>MATP_ECOSM</name>